<sequence length="2035" mass="229389">MFSKKPHGDVKKSTQKVLDTKKDALTRLKHLRIVIENAESIDLKQFFDQHFSHIYYVFFENFVTIEASLKQKGHKSQREELDAILFIFEKILQLLPERIHQRWQFHSIGLILKKLLHTGNSLKIRREGVRLFLLWLQALQDNCSKEQLWMFSCLIPGFSAPQSEYGPRTLDNLINPPLSLQETQVTIEEVTPLVPPQSGDKGQEDLTSYFLEALLKYIVIQVKSLEWKNKENQERGFSFLFSHFKKFYLPYIFPNICKENSLYHPVLDIPQIRPKPHYVMIKKDAETNETIYCTKEPFIQARVIVIRWLVSFWLEPKPHSGPNIPGMEGEVLPKNIQRAAASLVSREESKNDTVDKVDKSAEPEQSHSNTSTLTEREPSSSSLCSIDEEHLTDIEIVRRVFSSKRSNVNFVTEIFRQAFLLPICEAAAMRKVVKVYQEWIQQEEKPLFMQEPEDTAITCSDIPCSETVADHDSAIEDGEKREEENGTSTSEHVRNSSWTKNGSYQEAFHVCEEATEQNIQAGTQAVLQVFIINSSNIFLLEPANEIKNLLDEHTDMCKRILNIYRYMVVQVSMDKKTWEQMLLVLLRVTESVLKMSSQAFLQFQGKKSMTLAGRLAGPLFQTLIVAWIKANLNVYISRELWDDLLSVLSSLTYWEELATEWSLTMETLTKVLARNLYSLDLSDLPLDKLSEQKQKKHKGKGVGHEFQKVSVDKSFSRGWSRDQPGQAPMRQRSATTTGSPGTEKARSIVRQKTVDIDDAQILPRSTRVRHFSQSEDTGNEVFGALHEEQPLPRSSSTSDILEPFTVERAKVNKEDTSPKLPPLNSETGGNSANVPDLMDEFIAERLRSGNASTMTRRGSSPGSLEIPKDLPDILNKQNQMRPVDDPGVPSEWTSPASAGSSDLMSSDSHSDSFSAFQCEGRKFDNFGFGTDIGIPSSADVDLGSGHHQSTEEQEVASLTTLHLDSETSSLNQQAFSAEVATVTGSESASPVHSALGSRSQTPSPSTLSRAHIEQKDLQLDEKLHHSVLQTPDDLEISEFPSECCSVMAGGTLTGWHADVATVMWRRMLGILGDVNAIMDPEIHAQVFDYLCELWQNLAKIRDNLGISADNLTSPSPPVLIPPLRILTPWLFKATMLTDKYKQGKLHAYKLICNTMKRRQDVSPNRDFLTHFYNIMHCGLLHIDQDIVNTIIKHCSPQFFSLGLPGATMLIMDFIIAAGRVASSAFLNAPRVEAQVLLGSLVCFPNLYCELPALHPNIPDIAVSQFTDVKELIIKTVLSSARDEPSGPARCVALCSLGIWICEELVHESHHPQIKEALNVICVSLKFTNKTVAHVACNMLHMLVHYVPRLQIHQPQSPLKIIQILIATITHLLPSTEASSYEMDKRLVVSLLLCLLDWIMALPLKTLLQPVHATGAENDKTEKSVLNCIYKVLHGCVYGAQSFSNPKYFPISLSDLASVDYDPFMHLESLKEPEPLHSPDSERSSKLQPVTEVKTQMQQGLISIAARTVITHLVNHLGHYPMSGGPAMLTSQVCENHDNHYSESTELSPELFESPNIQFFVLNNTTLVSCIQIRSEESMPGGGLAAGLVSANSNVRIIVRDLSGKYSWDSAILYGPPIVSGLPEPTSFILSMSDQEKPEEPPTSNECLEDIAVKDGLSLQLRRFRETVPTWSTIREEEDVLDELLQYLGTTSPECLQRTGISLNVPAPQPLCISEKQENDVINAILKQYTEEKEFVEKHFNDLNMKASEQDEPTPQKPQSAFYYCRLLLSILGMNSWDKRRSFHLLKKNEKLLRELRNLDSRQCRETHKIAVFYVAEGQEDKYSILTNIGGSQAYEDFVAGLGWEVNLTNHCGFMGGLQKNRSTGLTTPYFATSTVEVIFHVSTRMPSDSDDSLTKKLRHLGNDEVHIVWSEHTRDYRRGIIPTEFGDVLIVIYPMKNHMFSIQIMKKPEVPFFGPLFDGAIVNGKVLPIMVRSTAINASRALKSLIPLYQNFYEERARYLQTIVQHHLEPTTFEDFAAQVFSPAPYHHFPADADH</sequence>
<protein>
    <recommendedName>
        <fullName>Ral GTPase-activating protein subunit alpha-1</fullName>
    </recommendedName>
    <alternativeName>
        <fullName>GAP-related-interacting partner to E12</fullName>
        <shortName>GRIPE</shortName>
    </alternativeName>
    <alternativeName>
        <fullName>GTPase-activating RapGAP domain-like 1</fullName>
    </alternativeName>
    <alternativeName>
        <fullName>Tuberin-like protein 1</fullName>
    </alternativeName>
    <alternativeName>
        <fullName>p240</fullName>
    </alternativeName>
</protein>
<reference key="1">
    <citation type="journal article" date="2002" name="J. Biol. Chem.">
        <title>Cloning and characterization of GRIPE, a novel interacting partner of the transcription factor E12 in developing mouse forebrain.</title>
        <authorList>
            <person name="Heng J.I.T."/>
            <person name="Tan S.-S."/>
        </authorList>
    </citation>
    <scope>NUCLEOTIDE SEQUENCE [MRNA] (ISOFORM 1S)</scope>
    <scope>SUBCELLULAR LOCATION</scope>
    <scope>TISSUE SPECIFICITY</scope>
    <scope>INTERACTION WITH TCF3/E12</scope>
    <source>
        <strain>C57BL/6J</strain>
        <tissue>Forebrain</tissue>
    </source>
</reference>
<reference key="2">
    <citation type="journal article" date="2004" name="Genomics">
        <title>Cloning, genomic structure and expression profile of TULIP1 (GARNL1), a brain-expressed candidate gene for 14q13-linked neurological phenotypes and its murine homolog.</title>
        <authorList>
            <person name="Schwarzbraun T."/>
            <person name="Vincent J.B."/>
            <person name="Schumacher A."/>
            <person name="Geschwind D.H."/>
            <person name="Oliveira J."/>
            <person name="Windpassinger C."/>
            <person name="Ofner L."/>
            <person name="Ledinegg M.K."/>
            <person name="Kroisel P.M."/>
            <person name="Wagner K."/>
            <person name="Petek E."/>
        </authorList>
    </citation>
    <scope>NUCLEOTIDE SEQUENCE [MRNA] (ISOFORMS 1 AND 2)</scope>
    <source>
        <strain>BALB/cJ</strain>
    </source>
</reference>
<reference key="3">
    <citation type="journal article" date="2003" name="DNA Res.">
        <title>Prediction of the coding sequences of mouse homologues of KIAA gene: III. The complete nucleotide sequences of 500 mouse KIAA-homologous cDNAs identified by screening of terminal sequences of cDNA clones randomly sampled from size-fractionated libraries.</title>
        <authorList>
            <person name="Okazaki N."/>
            <person name="Kikuno R."/>
            <person name="Ohara R."/>
            <person name="Inamoto S."/>
            <person name="Koseki H."/>
            <person name="Hiraoka S."/>
            <person name="Saga Y."/>
            <person name="Nagase T."/>
            <person name="Ohara O."/>
            <person name="Koga H."/>
        </authorList>
    </citation>
    <scope>NUCLEOTIDE SEQUENCE [LARGE SCALE MRNA] (ISOFORM 5)</scope>
    <source>
        <tissue>Embryonic tail</tissue>
    </source>
</reference>
<reference key="4">
    <citation type="journal article" date="2005" name="Science">
        <title>The transcriptional landscape of the mammalian genome.</title>
        <authorList>
            <person name="Carninci P."/>
            <person name="Kasukawa T."/>
            <person name="Katayama S."/>
            <person name="Gough J."/>
            <person name="Frith M.C."/>
            <person name="Maeda N."/>
            <person name="Oyama R."/>
            <person name="Ravasi T."/>
            <person name="Lenhard B."/>
            <person name="Wells C."/>
            <person name="Kodzius R."/>
            <person name="Shimokawa K."/>
            <person name="Bajic V.B."/>
            <person name="Brenner S.E."/>
            <person name="Batalov S."/>
            <person name="Forrest A.R."/>
            <person name="Zavolan M."/>
            <person name="Davis M.J."/>
            <person name="Wilming L.G."/>
            <person name="Aidinis V."/>
            <person name="Allen J.E."/>
            <person name="Ambesi-Impiombato A."/>
            <person name="Apweiler R."/>
            <person name="Aturaliya R.N."/>
            <person name="Bailey T.L."/>
            <person name="Bansal M."/>
            <person name="Baxter L."/>
            <person name="Beisel K.W."/>
            <person name="Bersano T."/>
            <person name="Bono H."/>
            <person name="Chalk A.M."/>
            <person name="Chiu K.P."/>
            <person name="Choudhary V."/>
            <person name="Christoffels A."/>
            <person name="Clutterbuck D.R."/>
            <person name="Crowe M.L."/>
            <person name="Dalla E."/>
            <person name="Dalrymple B.P."/>
            <person name="de Bono B."/>
            <person name="Della Gatta G."/>
            <person name="di Bernardo D."/>
            <person name="Down T."/>
            <person name="Engstrom P."/>
            <person name="Fagiolini M."/>
            <person name="Faulkner G."/>
            <person name="Fletcher C.F."/>
            <person name="Fukushima T."/>
            <person name="Furuno M."/>
            <person name="Futaki S."/>
            <person name="Gariboldi M."/>
            <person name="Georgii-Hemming P."/>
            <person name="Gingeras T.R."/>
            <person name="Gojobori T."/>
            <person name="Green R.E."/>
            <person name="Gustincich S."/>
            <person name="Harbers M."/>
            <person name="Hayashi Y."/>
            <person name="Hensch T.K."/>
            <person name="Hirokawa N."/>
            <person name="Hill D."/>
            <person name="Huminiecki L."/>
            <person name="Iacono M."/>
            <person name="Ikeo K."/>
            <person name="Iwama A."/>
            <person name="Ishikawa T."/>
            <person name="Jakt M."/>
            <person name="Kanapin A."/>
            <person name="Katoh M."/>
            <person name="Kawasawa Y."/>
            <person name="Kelso J."/>
            <person name="Kitamura H."/>
            <person name="Kitano H."/>
            <person name="Kollias G."/>
            <person name="Krishnan S.P."/>
            <person name="Kruger A."/>
            <person name="Kummerfeld S.K."/>
            <person name="Kurochkin I.V."/>
            <person name="Lareau L.F."/>
            <person name="Lazarevic D."/>
            <person name="Lipovich L."/>
            <person name="Liu J."/>
            <person name="Liuni S."/>
            <person name="McWilliam S."/>
            <person name="Madan Babu M."/>
            <person name="Madera M."/>
            <person name="Marchionni L."/>
            <person name="Matsuda H."/>
            <person name="Matsuzawa S."/>
            <person name="Miki H."/>
            <person name="Mignone F."/>
            <person name="Miyake S."/>
            <person name="Morris K."/>
            <person name="Mottagui-Tabar S."/>
            <person name="Mulder N."/>
            <person name="Nakano N."/>
            <person name="Nakauchi H."/>
            <person name="Ng P."/>
            <person name="Nilsson R."/>
            <person name="Nishiguchi S."/>
            <person name="Nishikawa S."/>
            <person name="Nori F."/>
            <person name="Ohara O."/>
            <person name="Okazaki Y."/>
            <person name="Orlando V."/>
            <person name="Pang K.C."/>
            <person name="Pavan W.J."/>
            <person name="Pavesi G."/>
            <person name="Pesole G."/>
            <person name="Petrovsky N."/>
            <person name="Piazza S."/>
            <person name="Reed J."/>
            <person name="Reid J.F."/>
            <person name="Ring B.Z."/>
            <person name="Ringwald M."/>
            <person name="Rost B."/>
            <person name="Ruan Y."/>
            <person name="Salzberg S.L."/>
            <person name="Sandelin A."/>
            <person name="Schneider C."/>
            <person name="Schoenbach C."/>
            <person name="Sekiguchi K."/>
            <person name="Semple C.A."/>
            <person name="Seno S."/>
            <person name="Sessa L."/>
            <person name="Sheng Y."/>
            <person name="Shibata Y."/>
            <person name="Shimada H."/>
            <person name="Shimada K."/>
            <person name="Silva D."/>
            <person name="Sinclair B."/>
            <person name="Sperling S."/>
            <person name="Stupka E."/>
            <person name="Sugiura K."/>
            <person name="Sultana R."/>
            <person name="Takenaka Y."/>
            <person name="Taki K."/>
            <person name="Tammoja K."/>
            <person name="Tan S.L."/>
            <person name="Tang S."/>
            <person name="Taylor M.S."/>
            <person name="Tegner J."/>
            <person name="Teichmann S.A."/>
            <person name="Ueda H.R."/>
            <person name="van Nimwegen E."/>
            <person name="Verardo R."/>
            <person name="Wei C.L."/>
            <person name="Yagi K."/>
            <person name="Yamanishi H."/>
            <person name="Zabarovsky E."/>
            <person name="Zhu S."/>
            <person name="Zimmer A."/>
            <person name="Hide W."/>
            <person name="Bult C."/>
            <person name="Grimmond S.M."/>
            <person name="Teasdale R.D."/>
            <person name="Liu E.T."/>
            <person name="Brusic V."/>
            <person name="Quackenbush J."/>
            <person name="Wahlestedt C."/>
            <person name="Mattick J.S."/>
            <person name="Hume D.A."/>
            <person name="Kai C."/>
            <person name="Sasaki D."/>
            <person name="Tomaru Y."/>
            <person name="Fukuda S."/>
            <person name="Kanamori-Katayama M."/>
            <person name="Suzuki M."/>
            <person name="Aoki J."/>
            <person name="Arakawa T."/>
            <person name="Iida J."/>
            <person name="Imamura K."/>
            <person name="Itoh M."/>
            <person name="Kato T."/>
            <person name="Kawaji H."/>
            <person name="Kawagashira N."/>
            <person name="Kawashima T."/>
            <person name="Kojima M."/>
            <person name="Kondo S."/>
            <person name="Konno H."/>
            <person name="Nakano K."/>
            <person name="Ninomiya N."/>
            <person name="Nishio T."/>
            <person name="Okada M."/>
            <person name="Plessy C."/>
            <person name="Shibata K."/>
            <person name="Shiraki T."/>
            <person name="Suzuki S."/>
            <person name="Tagami M."/>
            <person name="Waki K."/>
            <person name="Watahiki A."/>
            <person name="Okamura-Oho Y."/>
            <person name="Suzuki H."/>
            <person name="Kawai J."/>
            <person name="Hayashizaki Y."/>
        </authorList>
    </citation>
    <scope>NUCLEOTIDE SEQUENCE [LARGE SCALE MRNA] (ISOFORMS 4; 5 AND 6)</scope>
    <source>
        <strain>C57BL/6J</strain>
        <tissue>Thymus</tissue>
    </source>
</reference>
<reference key="5">
    <citation type="submission" date="2009-01" db="UniProtKB">
        <authorList>
            <person name="Lubec G."/>
            <person name="Sunyer B."/>
            <person name="Chen W.-Q."/>
        </authorList>
    </citation>
    <scope>PROTEIN SEQUENCE OF 339-350</scope>
    <scope>IDENTIFICATION BY MASS SPECTROMETRY</scope>
    <source>
        <strain>OF1</strain>
        <tissue>Hippocampus</tissue>
    </source>
</reference>
<reference key="6">
    <citation type="journal article" date="2007" name="Proc. Natl. Acad. Sci. U.S.A.">
        <title>Large-scale phosphorylation analysis of mouse liver.</title>
        <authorList>
            <person name="Villen J."/>
            <person name="Beausoleil S.A."/>
            <person name="Gerber S.A."/>
            <person name="Gygi S.P."/>
        </authorList>
    </citation>
    <scope>PHOSPHORYLATION [LARGE SCALE ANALYSIS] AT SER-859 AND SER-860</scope>
    <scope>IDENTIFICATION BY MASS SPECTROMETRY [LARGE SCALE ANALYSIS]</scope>
    <source>
        <tissue>Liver</tissue>
    </source>
</reference>
<reference key="7">
    <citation type="journal article" date="2009" name="Immunity">
        <title>The phagosomal proteome in interferon-gamma-activated macrophages.</title>
        <authorList>
            <person name="Trost M."/>
            <person name="English L."/>
            <person name="Lemieux S."/>
            <person name="Courcelles M."/>
            <person name="Desjardins M."/>
            <person name="Thibault P."/>
        </authorList>
    </citation>
    <scope>IDENTIFICATION BY MASS SPECTROMETRY [LARGE SCALE ANALYSIS]</scope>
</reference>
<reference key="8">
    <citation type="journal article" date="2010" name="Cell">
        <title>A tissue-specific atlas of mouse protein phosphorylation and expression.</title>
        <authorList>
            <person name="Huttlin E.L."/>
            <person name="Jedrychowski M.P."/>
            <person name="Elias J.E."/>
            <person name="Goswami T."/>
            <person name="Rad R."/>
            <person name="Beausoleil S.A."/>
            <person name="Villen J."/>
            <person name="Haas W."/>
            <person name="Sowa M.E."/>
            <person name="Gygi S.P."/>
        </authorList>
    </citation>
    <scope>PHOSPHORYLATION [LARGE SCALE ANALYSIS] AT THR-753; SER-772; SER-859; SER-860; SER-863 AND THR-1001</scope>
    <scope>IDENTIFICATION BY MASS SPECTROMETRY [LARGE SCALE ANALYSIS]</scope>
    <source>
        <tissue>Brain</tissue>
        <tissue>Brown adipose tissue</tissue>
        <tissue>Heart</tissue>
        <tissue>Kidney</tissue>
        <tissue>Lung</tissue>
        <tissue>Pancreas</tissue>
        <tissue>Spleen</tissue>
        <tissue>Testis</tissue>
    </source>
</reference>
<comment type="function">
    <text evidence="1">Catalytic subunit of the heterodimeric RalGAP1 complex which acts as a GTPase activator for the Ras-like small GTPases RALA and RALB (By similarity). May interact with the HLH region of TCF3/isoform E12.</text>
</comment>
<comment type="subunit">
    <text evidence="1 7">Component of the heterodimeric RalGAP1 complex with RALGAPB. Heterodimerization is required for activity (By similarity). Interacts with the HLH region of TCF3/isoform E12.</text>
</comment>
<comment type="subcellular location">
    <subcellularLocation>
        <location evidence="7">Cytoplasm</location>
    </subcellularLocation>
    <subcellularLocation>
        <location evidence="7">Nucleus</location>
    </subcellularLocation>
    <text>Translocated to the nucleus, when associated with TCF3/E12.</text>
</comment>
<comment type="alternative products">
    <event type="alternative splicing"/>
    <isoform>
        <id>Q6GYP7-1</id>
        <name>1</name>
        <name>3</name>
        <sequence type="displayed"/>
    </isoform>
    <isoform>
        <id>Q6GYP7-2</id>
        <name>2</name>
        <sequence type="described" ref="VSP_011338"/>
    </isoform>
    <isoform>
        <id>Q6GYP7-3</id>
        <name>4</name>
        <sequence type="described" ref="VSP_011332 VSP_011335"/>
    </isoform>
    <isoform>
        <id>Q6GYP7-4</id>
        <name>5</name>
        <sequence type="described" ref="VSP_011333 VSP_011334"/>
    </isoform>
    <isoform>
        <id>Q6GYP7-5</id>
        <name>6</name>
        <sequence type="described" ref="VSP_011331 VSP_011336 VSP_011337"/>
    </isoform>
    <isoform>
        <id>Q6GYP7-6</id>
        <name>1S</name>
        <sequence type="described" ref="VSP_011330"/>
    </isoform>
</comment>
<comment type="tissue specificity">
    <text evidence="7">Expressed during embryogenesis. Expressed in the adult brain, particularly in neurons of the cortex and hippocampus.</text>
</comment>
<comment type="developmental stage">
    <text>Expression decreased during development, but persists in the adult brain.</text>
</comment>
<comment type="miscellaneous">
    <molecule>Isoform 1S</molecule>
    <text evidence="12">May be a partial isoform 1.</text>
</comment>
<comment type="caution">
    <text evidence="13">Was initially thought to act as a transcriptional regulator via its interaction with TCF3/E12.</text>
</comment>
<comment type="sequence caution" evidence="12">
    <conflict type="erroneous termination">
        <sequence resource="EMBL-CDS" id="BAA92774"/>
    </conflict>
    <text>Truncated C-terminus.</text>
</comment>
<comment type="sequence caution" evidence="12">
    <conflict type="erroneous initiation">
        <sequence resource="EMBL-CDS" id="BAC98046"/>
    </conflict>
</comment>
<evidence type="ECO:0000250" key="1"/>
<evidence type="ECO:0000250" key="2">
    <source>
        <dbReference type="UniProtKB" id="O55007"/>
    </source>
</evidence>
<evidence type="ECO:0000250" key="3">
    <source>
        <dbReference type="UniProtKB" id="Q6GYQ0"/>
    </source>
</evidence>
<evidence type="ECO:0000255" key="4"/>
<evidence type="ECO:0000255" key="5">
    <source>
        <dbReference type="PROSITE-ProRule" id="PRU00165"/>
    </source>
</evidence>
<evidence type="ECO:0000256" key="6">
    <source>
        <dbReference type="SAM" id="MobiDB-lite"/>
    </source>
</evidence>
<evidence type="ECO:0000269" key="7">
    <source>
    </source>
</evidence>
<evidence type="ECO:0000303" key="8">
    <source>
    </source>
</evidence>
<evidence type="ECO:0000303" key="9">
    <source>
    </source>
</evidence>
<evidence type="ECO:0000303" key="10">
    <source>
    </source>
</evidence>
<evidence type="ECO:0000303" key="11">
    <source>
    </source>
</evidence>
<evidence type="ECO:0000305" key="12"/>
<evidence type="ECO:0000305" key="13">
    <source>
    </source>
</evidence>
<evidence type="ECO:0007744" key="14">
    <source>
    </source>
</evidence>
<evidence type="ECO:0007744" key="15">
    <source>
    </source>
</evidence>
<proteinExistence type="evidence at protein level"/>
<keyword id="KW-0025">Alternative splicing</keyword>
<keyword id="KW-0175">Coiled coil</keyword>
<keyword id="KW-0963">Cytoplasm</keyword>
<keyword id="KW-0903">Direct protein sequencing</keyword>
<keyword id="KW-0343">GTPase activation</keyword>
<keyword id="KW-0539">Nucleus</keyword>
<keyword id="KW-0597">Phosphoprotein</keyword>
<keyword id="KW-1185">Reference proteome</keyword>
<feature type="chain" id="PRO_0000056754" description="Ral GTPase-activating protein subunit alpha-1">
    <location>
        <begin position="1"/>
        <end position="2035"/>
    </location>
</feature>
<feature type="domain" description="Rap-GAP" evidence="5">
    <location>
        <begin position="1795"/>
        <end position="2003"/>
    </location>
</feature>
<feature type="region of interest" description="Disordered" evidence="6">
    <location>
        <begin position="343"/>
        <end position="384"/>
    </location>
</feature>
<feature type="region of interest" description="Disordered" evidence="6">
    <location>
        <begin position="477"/>
        <end position="496"/>
    </location>
</feature>
<feature type="region of interest" description="Disordered" evidence="6">
    <location>
        <begin position="714"/>
        <end position="752"/>
    </location>
</feature>
<feature type="region of interest" description="Disordered" evidence="6">
    <location>
        <begin position="807"/>
        <end position="834"/>
    </location>
</feature>
<feature type="region of interest" description="Disordered" evidence="6">
    <location>
        <begin position="848"/>
        <end position="911"/>
    </location>
</feature>
<feature type="region of interest" description="Disordered" evidence="6">
    <location>
        <begin position="986"/>
        <end position="1011"/>
    </location>
</feature>
<feature type="region of interest" description="Minimal domain that binds to TCF3/E12">
    <location>
        <begin position="1326"/>
        <end position="2035"/>
    </location>
</feature>
<feature type="coiled-coil region" evidence="4">
    <location>
        <begin position="1713"/>
        <end position="1748"/>
    </location>
</feature>
<feature type="compositionally biased region" description="Basic and acidic residues" evidence="6">
    <location>
        <begin position="345"/>
        <end position="365"/>
    </location>
</feature>
<feature type="compositionally biased region" description="Polar residues" evidence="6">
    <location>
        <begin position="366"/>
        <end position="384"/>
    </location>
</feature>
<feature type="compositionally biased region" description="Polar residues" evidence="6">
    <location>
        <begin position="486"/>
        <end position="496"/>
    </location>
</feature>
<feature type="compositionally biased region" description="Basic and acidic residues" evidence="6">
    <location>
        <begin position="807"/>
        <end position="817"/>
    </location>
</feature>
<feature type="compositionally biased region" description="Polar residues" evidence="6">
    <location>
        <begin position="824"/>
        <end position="833"/>
    </location>
</feature>
<feature type="compositionally biased region" description="Polar residues" evidence="6">
    <location>
        <begin position="849"/>
        <end position="862"/>
    </location>
</feature>
<feature type="compositionally biased region" description="Low complexity" evidence="6">
    <location>
        <begin position="894"/>
        <end position="911"/>
    </location>
</feature>
<feature type="compositionally biased region" description="Polar residues" evidence="6">
    <location>
        <begin position="986"/>
        <end position="1008"/>
    </location>
</feature>
<feature type="modified residue" description="Phosphoserine" evidence="3">
    <location>
        <position position="710"/>
    </location>
</feature>
<feature type="modified residue" description="Phosphoserine" evidence="3">
    <location>
        <position position="720"/>
    </location>
</feature>
<feature type="modified residue" description="Phosphothreonine" evidence="15">
    <location>
        <position position="753"/>
    </location>
</feature>
<feature type="modified residue" description="Phosphoserine" evidence="15">
    <location>
        <position position="772"/>
    </location>
</feature>
<feature type="modified residue" description="Phosphothreonine" evidence="3">
    <location>
        <position position="777"/>
    </location>
</feature>
<feature type="modified residue" description="Phosphoserine" evidence="3">
    <location>
        <position position="796"/>
    </location>
</feature>
<feature type="modified residue" description="Phosphoserine" evidence="14 15">
    <location>
        <position position="859"/>
    </location>
</feature>
<feature type="modified residue" description="Phosphoserine" evidence="14 15">
    <location>
        <position position="860"/>
    </location>
</feature>
<feature type="modified residue" description="Phosphoserine" evidence="15">
    <location>
        <position position="863"/>
    </location>
</feature>
<feature type="modified residue" description="Phosphoserine" evidence="3">
    <location>
        <position position="985"/>
    </location>
</feature>
<feature type="modified residue" description="Phosphoserine" evidence="3">
    <location>
        <position position="989"/>
    </location>
</feature>
<feature type="modified residue" description="Phosphoserine" evidence="3">
    <location>
        <position position="993"/>
    </location>
</feature>
<feature type="modified residue" description="Phosphoserine" evidence="2">
    <location>
        <position position="999"/>
    </location>
</feature>
<feature type="modified residue" description="Phosphothreonine" evidence="15">
    <location>
        <position position="1001"/>
    </location>
</feature>
<feature type="modified residue" description="Phosphoserine" evidence="2">
    <location>
        <position position="1003"/>
    </location>
</feature>
<feature type="modified residue" description="Phosphoserine" evidence="2">
    <location>
        <position position="1477"/>
    </location>
</feature>
<feature type="splice variant" id="VSP_011331" description="In isoform 6." evidence="11">
    <location>
        <begin position="1"/>
        <end position="1337"/>
    </location>
</feature>
<feature type="splice variant" id="VSP_011332" description="In isoform 4." evidence="11">
    <location>
        <begin position="1"/>
        <end position="1298"/>
    </location>
</feature>
<feature type="splice variant" id="VSP_011330" description="In isoform 1S." evidence="8">
    <location>
        <begin position="1"/>
        <end position="555"/>
    </location>
</feature>
<feature type="splice variant" id="VSP_011333" description="In isoform 5." evidence="9 11">
    <original>EIS</original>
    <variation>GNA</variation>
    <location>
        <begin position="1035"/>
        <end position="1037"/>
    </location>
</feature>
<feature type="splice variant" id="VSP_011334" description="In isoform 5." evidence="9 11">
    <location>
        <begin position="1038"/>
        <end position="2035"/>
    </location>
</feature>
<feature type="splice variant" id="VSP_011335" description="In isoform 4." evidence="11">
    <original>WICEEL</original>
    <variation>MMRFVE</variation>
    <location>
        <begin position="1299"/>
        <end position="1304"/>
    </location>
</feature>
<feature type="splice variant" id="VSP_011336" description="In isoform 6." evidence="11">
    <original>LRHLGNDE</original>
    <variation>VSAEGKHF</variation>
    <location>
        <begin position="1897"/>
        <end position="1904"/>
    </location>
</feature>
<feature type="splice variant" id="VSP_011337" description="In isoform 6." evidence="11">
    <location>
        <begin position="1905"/>
        <end position="2035"/>
    </location>
</feature>
<feature type="splice variant" id="VSP_011338" description="In isoform 2." evidence="10">
    <original>DH</original>
    <variation>VGSYPEIPPSDAAPAAQVDGADLASPMSPRTSKSR</variation>
    <location>
        <begin position="2034"/>
        <end position="2035"/>
    </location>
</feature>
<feature type="sequence conflict" description="In Ref. 3; BAC98046." evidence="12" ref="3">
    <original>L</original>
    <variation>V</variation>
    <location>
        <position position="420"/>
    </location>
</feature>
<feature type="sequence conflict" description="In Ref. 1; AAL47577." evidence="12" ref="1">
    <original>L</original>
    <variation>S</variation>
    <location>
        <position position="651"/>
    </location>
</feature>
<feature type="sequence conflict" description="In Ref. 1; AAL47577." evidence="12" ref="1">
    <original>P</original>
    <variation>L</variation>
    <location>
        <position position="724"/>
    </location>
</feature>
<feature type="sequence conflict" description="In Ref. 1; AAL47577." evidence="12" ref="1">
    <original>E</original>
    <variation>V</variation>
    <location>
        <position position="775"/>
    </location>
</feature>
<feature type="sequence conflict" description="In Ref. 1; AAL47577." evidence="12" ref="1">
    <original>D</original>
    <variation>G</variation>
    <location>
        <position position="869"/>
    </location>
</feature>
<feature type="sequence conflict" description="In Ref. 1; AAL47577." evidence="12" ref="1">
    <original>D</original>
    <variation>N</variation>
    <location>
        <position position="1166"/>
    </location>
</feature>
<feature type="sequence conflict" description="In Ref. 4; BAA92774." evidence="12" ref="4">
    <original>I</original>
    <variation>V</variation>
    <location>
        <position position="1365"/>
    </location>
</feature>
<feature type="sequence conflict" description="In Ref. 4; BAA92774." evidence="12" ref="4">
    <original>I</original>
    <variation>T</variation>
    <location>
        <position position="1398"/>
    </location>
</feature>
<feature type="sequence conflict" description="In Ref. 4; BAA92774." evidence="12" ref="4">
    <original>T</original>
    <variation>P</variation>
    <location>
        <position position="1494"/>
    </location>
</feature>
<feature type="sequence conflict" description="In Ref. 4; BAA92774." evidence="12" ref="4">
    <original>G</original>
    <variation>S</variation>
    <location>
        <position position="1586"/>
    </location>
</feature>
<feature type="sequence conflict" description="In Ref. 4; BAA92774." evidence="12" ref="4">
    <original>Q</original>
    <variation>P</variation>
    <location>
        <position position="1634"/>
    </location>
</feature>
<feature type="sequence conflict" description="In Ref. 4; BAA92774." evidence="12" ref="4">
    <original>E</original>
    <variation>K</variation>
    <location>
        <position position="1638"/>
    </location>
</feature>
<feature type="sequence conflict" description="In Ref. 4; BAA92774." evidence="12" ref="4">
    <original>R</original>
    <variation>Q</variation>
    <location>
        <position position="1674"/>
    </location>
</feature>
<feature type="sequence conflict" description="In Ref. 1; AAL47577." evidence="12" ref="1">
    <original>SWDKRR</original>
    <variation>WAAGIPGTNGG</variation>
    <location>
        <begin position="1775"/>
        <end position="1780"/>
    </location>
</feature>
<feature type="sequence conflict" description="In Ref. 1; AAL47577." evidence="12" ref="1">
    <original>VLP</original>
    <variation>SSA</variation>
    <location>
        <begin position="1966"/>
        <end position="1968"/>
    </location>
</feature>
<organism>
    <name type="scientific">Mus musculus</name>
    <name type="common">Mouse</name>
    <dbReference type="NCBI Taxonomy" id="10090"/>
    <lineage>
        <taxon>Eukaryota</taxon>
        <taxon>Metazoa</taxon>
        <taxon>Chordata</taxon>
        <taxon>Craniata</taxon>
        <taxon>Vertebrata</taxon>
        <taxon>Euteleostomi</taxon>
        <taxon>Mammalia</taxon>
        <taxon>Eutheria</taxon>
        <taxon>Euarchontoglires</taxon>
        <taxon>Glires</taxon>
        <taxon>Rodentia</taxon>
        <taxon>Myomorpha</taxon>
        <taxon>Muroidea</taxon>
        <taxon>Muridae</taxon>
        <taxon>Murinae</taxon>
        <taxon>Mus</taxon>
        <taxon>Mus</taxon>
    </lineage>
</organism>
<name>RGPA1_MOUSE</name>
<dbReference type="EMBL" id="AY066011">
    <property type="protein sequence ID" value="AAL47577.1"/>
    <property type="molecule type" value="mRNA"/>
</dbReference>
<dbReference type="EMBL" id="AY596972">
    <property type="protein sequence ID" value="AAT49273.1"/>
    <property type="molecule type" value="mRNA"/>
</dbReference>
<dbReference type="EMBL" id="AY596973">
    <property type="protein sequence ID" value="AAT49274.1"/>
    <property type="molecule type" value="mRNA"/>
</dbReference>
<dbReference type="EMBL" id="AY596974">
    <property type="protein sequence ID" value="AAT49275.1"/>
    <property type="molecule type" value="mRNA"/>
</dbReference>
<dbReference type="EMBL" id="AK129236">
    <property type="protein sequence ID" value="BAC98046.1"/>
    <property type="status" value="ALT_INIT"/>
    <property type="molecule type" value="mRNA"/>
</dbReference>
<dbReference type="EMBL" id="AB032400">
    <property type="protein sequence ID" value="BAA92774.1"/>
    <property type="status" value="ALT_SEQ"/>
    <property type="molecule type" value="mRNA"/>
</dbReference>
<dbReference type="EMBL" id="AK042116">
    <property type="protein sequence ID" value="BAC31171.1"/>
    <property type="molecule type" value="mRNA"/>
</dbReference>
<dbReference type="EMBL" id="AK083518">
    <property type="protein sequence ID" value="BAC38939.1"/>
    <property type="molecule type" value="mRNA"/>
</dbReference>
<dbReference type="CCDS" id="CCDS36452.1">
    <molecule id="Q6GYP7-1"/>
</dbReference>
<dbReference type="RefSeq" id="NP_001003719.1">
    <property type="nucleotide sequence ID" value="NM_001003719.2"/>
</dbReference>
<dbReference type="RefSeq" id="NP_001106185.1">
    <molecule id="Q6GYP7-1"/>
    <property type="nucleotide sequence ID" value="NM_001112714.3"/>
</dbReference>
<dbReference type="RefSeq" id="NP_001273192.1">
    <property type="nucleotide sequence ID" value="NM_001286263.1"/>
</dbReference>
<dbReference type="RefSeq" id="NP_064378.4">
    <molecule id="Q6GYP7-1"/>
    <property type="nucleotide sequence ID" value="NM_019994.5"/>
</dbReference>
<dbReference type="SMR" id="Q6GYP7"/>
<dbReference type="BioGRID" id="208171">
    <property type="interactions" value="15"/>
</dbReference>
<dbReference type="FunCoup" id="Q6GYP7">
    <property type="interactions" value="5735"/>
</dbReference>
<dbReference type="IntAct" id="Q6GYP7">
    <property type="interactions" value="1"/>
</dbReference>
<dbReference type="STRING" id="10090.ENSMUSP00000082503"/>
<dbReference type="GlyGen" id="Q6GYP7">
    <property type="glycosylation" value="2 sites, 2 N-linked glycans (2 sites)"/>
</dbReference>
<dbReference type="iPTMnet" id="Q6GYP7"/>
<dbReference type="PhosphoSitePlus" id="Q6GYP7"/>
<dbReference type="SwissPalm" id="Q6GYP7"/>
<dbReference type="jPOST" id="Q6GYP7"/>
<dbReference type="PaxDb" id="10090-ENSMUSP00000106315"/>
<dbReference type="PeptideAtlas" id="Q6GYP7"/>
<dbReference type="ProteomicsDB" id="254933">
    <molecule id="Q6GYP7-1"/>
</dbReference>
<dbReference type="ProteomicsDB" id="254934">
    <molecule id="Q6GYP7-2"/>
</dbReference>
<dbReference type="ProteomicsDB" id="254935">
    <molecule id="Q6GYP7-3"/>
</dbReference>
<dbReference type="ProteomicsDB" id="254936">
    <molecule id="Q6GYP7-4"/>
</dbReference>
<dbReference type="ProteomicsDB" id="254937">
    <molecule id="Q6GYP7-5"/>
</dbReference>
<dbReference type="ProteomicsDB" id="254938">
    <molecule id="Q6GYP7-6"/>
</dbReference>
<dbReference type="Pumba" id="Q6GYP7"/>
<dbReference type="Antibodypedia" id="79">
    <property type="antibodies" value="89 antibodies from 19 providers"/>
</dbReference>
<dbReference type="DNASU" id="56784"/>
<dbReference type="Ensembl" id="ENSMUST00000085385.7">
    <molecule id="Q6GYP7-1"/>
    <property type="protein sequence ID" value="ENSMUSP00000082503.6"/>
    <property type="gene ID" value="ENSMUSG00000021027.19"/>
</dbReference>
<dbReference type="GeneID" id="56784"/>
<dbReference type="KEGG" id="mmu:56784"/>
<dbReference type="UCSC" id="uc007nou.2">
    <molecule id="Q6GYP7-1"/>
    <property type="organism name" value="mouse"/>
</dbReference>
<dbReference type="UCSC" id="uc007nov.2">
    <molecule id="Q6GYP7-2"/>
    <property type="organism name" value="mouse"/>
</dbReference>
<dbReference type="UCSC" id="uc007now.1">
    <molecule id="Q6GYP7-5"/>
    <property type="organism name" value="mouse"/>
</dbReference>
<dbReference type="UCSC" id="uc007nox.2">
    <molecule id="Q6GYP7-4"/>
    <property type="organism name" value="mouse"/>
</dbReference>
<dbReference type="AGR" id="MGI:1931050"/>
<dbReference type="CTD" id="253959"/>
<dbReference type="MGI" id="MGI:1931050">
    <property type="gene designation" value="Ralgapa1"/>
</dbReference>
<dbReference type="VEuPathDB" id="HostDB:ENSMUSG00000021027"/>
<dbReference type="eggNOG" id="KOG3686">
    <property type="taxonomic scope" value="Eukaryota"/>
</dbReference>
<dbReference type="GeneTree" id="ENSGT00950000183139"/>
<dbReference type="HOGENOM" id="CLU_001676_0_0_1"/>
<dbReference type="InParanoid" id="Q6GYP7"/>
<dbReference type="PhylomeDB" id="Q6GYP7"/>
<dbReference type="TreeFam" id="TF324484"/>
<dbReference type="Reactome" id="R-MMU-9013407">
    <property type="pathway name" value="RHOH GTPase cycle"/>
</dbReference>
<dbReference type="BioGRID-ORCS" id="56784">
    <property type="hits" value="4 hits in 80 CRISPR screens"/>
</dbReference>
<dbReference type="ChiTaRS" id="Ralgapa1">
    <property type="organism name" value="mouse"/>
</dbReference>
<dbReference type="PRO" id="PR:Q6GYP7"/>
<dbReference type="Proteomes" id="UP000000589">
    <property type="component" value="Chromosome 12"/>
</dbReference>
<dbReference type="RNAct" id="Q6GYP7">
    <property type="molecule type" value="protein"/>
</dbReference>
<dbReference type="Bgee" id="ENSMUSG00000021027">
    <property type="expression patterns" value="Expressed in ascending aorta and 235 other cell types or tissues"/>
</dbReference>
<dbReference type="ExpressionAtlas" id="Q6GYP7">
    <property type="expression patterns" value="baseline and differential"/>
</dbReference>
<dbReference type="GO" id="GO:0005737">
    <property type="term" value="C:cytoplasm"/>
    <property type="evidence" value="ECO:0000314"/>
    <property type="project" value="MGI"/>
</dbReference>
<dbReference type="GO" id="GO:0005634">
    <property type="term" value="C:nucleus"/>
    <property type="evidence" value="ECO:0000314"/>
    <property type="project" value="MGI"/>
</dbReference>
<dbReference type="GO" id="GO:0005096">
    <property type="term" value="F:GTPase activator activity"/>
    <property type="evidence" value="ECO:0000250"/>
    <property type="project" value="UniProtKB"/>
</dbReference>
<dbReference type="GO" id="GO:0090630">
    <property type="term" value="P:activation of GTPase activity"/>
    <property type="evidence" value="ECO:0000250"/>
    <property type="project" value="UniProtKB"/>
</dbReference>
<dbReference type="GO" id="GO:0000122">
    <property type="term" value="P:negative regulation of transcription by RNA polymerase II"/>
    <property type="evidence" value="ECO:0000314"/>
    <property type="project" value="MGI"/>
</dbReference>
<dbReference type="GO" id="GO:0051056">
    <property type="term" value="P:regulation of small GTPase mediated signal transduction"/>
    <property type="evidence" value="ECO:0007669"/>
    <property type="project" value="InterPro"/>
</dbReference>
<dbReference type="FunFam" id="3.40.50.11210:FF:000001">
    <property type="entry name" value="Ral GTPase-activating protein subunit alpha-1 isoform 1"/>
    <property type="match status" value="1"/>
</dbReference>
<dbReference type="Gene3D" id="3.40.50.11210">
    <property type="entry name" value="Rap/Ran-GAP"/>
    <property type="match status" value="1"/>
</dbReference>
<dbReference type="InterPro" id="IPR016024">
    <property type="entry name" value="ARM-type_fold"/>
</dbReference>
<dbReference type="InterPro" id="IPR035974">
    <property type="entry name" value="Rap/Ran-GAP_sf"/>
</dbReference>
<dbReference type="InterPro" id="IPR000331">
    <property type="entry name" value="Rap/Ran_GAP_dom"/>
</dbReference>
<dbReference type="InterPro" id="IPR046859">
    <property type="entry name" value="RGPA/RALGAPB_N"/>
</dbReference>
<dbReference type="InterPro" id="IPR027107">
    <property type="entry name" value="Tuberin/Ral-act_asu"/>
</dbReference>
<dbReference type="PANTHER" id="PTHR10063:SF3">
    <property type="entry name" value="RAL GTPASE-ACTIVATING PROTEIN SUBUNIT ALPHA-1"/>
    <property type="match status" value="1"/>
</dbReference>
<dbReference type="PANTHER" id="PTHR10063">
    <property type="entry name" value="TUBERIN"/>
    <property type="match status" value="1"/>
</dbReference>
<dbReference type="Pfam" id="PF20412">
    <property type="entry name" value="RALGAPB_N"/>
    <property type="match status" value="1"/>
</dbReference>
<dbReference type="Pfam" id="PF02145">
    <property type="entry name" value="Rap_GAP"/>
    <property type="match status" value="1"/>
</dbReference>
<dbReference type="SUPFAM" id="SSF48371">
    <property type="entry name" value="ARM repeat"/>
    <property type="match status" value="1"/>
</dbReference>
<dbReference type="SUPFAM" id="SSF111347">
    <property type="entry name" value="Rap/Ran-GAP"/>
    <property type="match status" value="1"/>
</dbReference>
<dbReference type="PROSITE" id="PS50085">
    <property type="entry name" value="RAPGAP"/>
    <property type="match status" value="1"/>
</dbReference>
<gene>
    <name type="primary">Ralgapa1</name>
    <name type="synonym">Garnl1</name>
    <name type="synonym">Kiaa0884</name>
    <name type="synonym">Tulip1</name>
</gene>
<accession>Q6GYP7</accession>
<accession>Q6GYP6</accession>
<accession>Q6ZQ28</accession>
<accession>Q8BNJ5</accession>
<accession>Q8C9G8</accession>
<accession>Q8CIW4</accession>
<accession>Q9JMC4</accession>